<feature type="chain" id="PRO_1000134967" description="Imidazole glycerol phosphate synthase subunit HisF">
    <location>
        <begin position="1"/>
        <end position="252"/>
    </location>
</feature>
<feature type="active site" evidence="1">
    <location>
        <position position="11"/>
    </location>
</feature>
<feature type="active site" evidence="1">
    <location>
        <position position="130"/>
    </location>
</feature>
<sequence length="252" mass="26847">MLAKRIIPCLDVKEGRVVKGVNFIGLQDVGDPVEIAALYNDAGADEIVFLDITATHEGRKTIIDVVEKTASKVFIPLTVGGGISSVKDMYNLLRAGADKVSINSAAVRNPKLIEEGAEHFGSQCIVVAIDARKVAEDKWNVYVNGGRVDTGIDAIGWAKCVTELGAGEILLTSMDADGTKNGYDLRLTEEISKSVSVPVIASGGCGHANHIIEVFQKTTVDAALAASIFHYGEATIGDVKRKLRNANVEVRL</sequence>
<proteinExistence type="inferred from homology"/>
<gene>
    <name evidence="1" type="primary">hisF</name>
    <name type="ordered locus">BCAH187_A1569</name>
</gene>
<comment type="function">
    <text evidence="1">IGPS catalyzes the conversion of PRFAR and glutamine to IGP, AICAR and glutamate. The HisF subunit catalyzes the cyclization activity that produces IGP and AICAR from PRFAR using the ammonia provided by the HisH subunit.</text>
</comment>
<comment type="catalytic activity">
    <reaction evidence="1">
        <text>5-[(5-phospho-1-deoxy-D-ribulos-1-ylimino)methylamino]-1-(5-phospho-beta-D-ribosyl)imidazole-4-carboxamide + L-glutamine = D-erythro-1-(imidazol-4-yl)glycerol 3-phosphate + 5-amino-1-(5-phospho-beta-D-ribosyl)imidazole-4-carboxamide + L-glutamate + H(+)</text>
        <dbReference type="Rhea" id="RHEA:24793"/>
        <dbReference type="ChEBI" id="CHEBI:15378"/>
        <dbReference type="ChEBI" id="CHEBI:29985"/>
        <dbReference type="ChEBI" id="CHEBI:58278"/>
        <dbReference type="ChEBI" id="CHEBI:58359"/>
        <dbReference type="ChEBI" id="CHEBI:58475"/>
        <dbReference type="ChEBI" id="CHEBI:58525"/>
        <dbReference type="EC" id="4.3.2.10"/>
    </reaction>
</comment>
<comment type="pathway">
    <text evidence="1">Amino-acid biosynthesis; L-histidine biosynthesis; L-histidine from 5-phospho-alpha-D-ribose 1-diphosphate: step 5/9.</text>
</comment>
<comment type="subunit">
    <text evidence="1">Heterodimer of HisH and HisF.</text>
</comment>
<comment type="subcellular location">
    <subcellularLocation>
        <location evidence="1">Cytoplasm</location>
    </subcellularLocation>
</comment>
<comment type="similarity">
    <text evidence="1">Belongs to the HisA/HisF family.</text>
</comment>
<reference key="1">
    <citation type="submission" date="2008-10" db="EMBL/GenBank/DDBJ databases">
        <title>Genome sequence of Bacillus cereus AH187.</title>
        <authorList>
            <person name="Dodson R.J."/>
            <person name="Durkin A.S."/>
            <person name="Rosovitz M.J."/>
            <person name="Rasko D.A."/>
            <person name="Kolsto A.B."/>
            <person name="Okstad O.A."/>
            <person name="Ravel J."/>
            <person name="Sutton G."/>
        </authorList>
    </citation>
    <scope>NUCLEOTIDE SEQUENCE [LARGE SCALE GENOMIC DNA]</scope>
    <source>
        <strain>AH187</strain>
    </source>
</reference>
<protein>
    <recommendedName>
        <fullName evidence="1">Imidazole glycerol phosphate synthase subunit HisF</fullName>
        <ecNumber evidence="1">4.3.2.10</ecNumber>
    </recommendedName>
    <alternativeName>
        <fullName evidence="1">IGP synthase cyclase subunit</fullName>
    </alternativeName>
    <alternativeName>
        <fullName evidence="1">IGP synthase subunit HisF</fullName>
    </alternativeName>
    <alternativeName>
        <fullName evidence="1">ImGP synthase subunit HisF</fullName>
        <shortName evidence="1">IGPS subunit HisF</shortName>
    </alternativeName>
</protein>
<name>HIS6_BACC7</name>
<organism>
    <name type="scientific">Bacillus cereus (strain AH187)</name>
    <dbReference type="NCBI Taxonomy" id="405534"/>
    <lineage>
        <taxon>Bacteria</taxon>
        <taxon>Bacillati</taxon>
        <taxon>Bacillota</taxon>
        <taxon>Bacilli</taxon>
        <taxon>Bacillales</taxon>
        <taxon>Bacillaceae</taxon>
        <taxon>Bacillus</taxon>
        <taxon>Bacillus cereus group</taxon>
    </lineage>
</organism>
<keyword id="KW-0028">Amino-acid biosynthesis</keyword>
<keyword id="KW-0963">Cytoplasm</keyword>
<keyword id="KW-0368">Histidine biosynthesis</keyword>
<keyword id="KW-0456">Lyase</keyword>
<evidence type="ECO:0000255" key="1">
    <source>
        <dbReference type="HAMAP-Rule" id="MF_01013"/>
    </source>
</evidence>
<accession>B7HKD4</accession>
<dbReference type="EC" id="4.3.2.10" evidence="1"/>
<dbReference type="EMBL" id="CP001177">
    <property type="protein sequence ID" value="ACJ82090.1"/>
    <property type="molecule type" value="Genomic_DNA"/>
</dbReference>
<dbReference type="SMR" id="B7HKD4"/>
<dbReference type="KEGG" id="bcr:BCAH187_A1569"/>
<dbReference type="HOGENOM" id="CLU_048577_4_0_9"/>
<dbReference type="UniPathway" id="UPA00031">
    <property type="reaction ID" value="UER00010"/>
</dbReference>
<dbReference type="Proteomes" id="UP000002214">
    <property type="component" value="Chromosome"/>
</dbReference>
<dbReference type="GO" id="GO:0005737">
    <property type="term" value="C:cytoplasm"/>
    <property type="evidence" value="ECO:0007669"/>
    <property type="project" value="UniProtKB-SubCell"/>
</dbReference>
<dbReference type="GO" id="GO:0000107">
    <property type="term" value="F:imidazoleglycerol-phosphate synthase activity"/>
    <property type="evidence" value="ECO:0007669"/>
    <property type="project" value="UniProtKB-UniRule"/>
</dbReference>
<dbReference type="GO" id="GO:0016829">
    <property type="term" value="F:lyase activity"/>
    <property type="evidence" value="ECO:0007669"/>
    <property type="project" value="UniProtKB-KW"/>
</dbReference>
<dbReference type="GO" id="GO:0000105">
    <property type="term" value="P:L-histidine biosynthetic process"/>
    <property type="evidence" value="ECO:0007669"/>
    <property type="project" value="UniProtKB-UniRule"/>
</dbReference>
<dbReference type="CDD" id="cd04731">
    <property type="entry name" value="HisF"/>
    <property type="match status" value="1"/>
</dbReference>
<dbReference type="FunFam" id="3.20.20.70:FF:000006">
    <property type="entry name" value="Imidazole glycerol phosphate synthase subunit HisF"/>
    <property type="match status" value="1"/>
</dbReference>
<dbReference type="Gene3D" id="3.20.20.70">
    <property type="entry name" value="Aldolase class I"/>
    <property type="match status" value="1"/>
</dbReference>
<dbReference type="HAMAP" id="MF_01013">
    <property type="entry name" value="HisF"/>
    <property type="match status" value="1"/>
</dbReference>
<dbReference type="InterPro" id="IPR013785">
    <property type="entry name" value="Aldolase_TIM"/>
</dbReference>
<dbReference type="InterPro" id="IPR006062">
    <property type="entry name" value="His_biosynth"/>
</dbReference>
<dbReference type="InterPro" id="IPR004651">
    <property type="entry name" value="HisF"/>
</dbReference>
<dbReference type="InterPro" id="IPR050064">
    <property type="entry name" value="IGPS_HisA/HisF"/>
</dbReference>
<dbReference type="InterPro" id="IPR011060">
    <property type="entry name" value="RibuloseP-bd_barrel"/>
</dbReference>
<dbReference type="NCBIfam" id="TIGR00735">
    <property type="entry name" value="hisF"/>
    <property type="match status" value="1"/>
</dbReference>
<dbReference type="PANTHER" id="PTHR21235:SF2">
    <property type="entry name" value="IMIDAZOLE GLYCEROL PHOSPHATE SYNTHASE HISHF"/>
    <property type="match status" value="1"/>
</dbReference>
<dbReference type="PANTHER" id="PTHR21235">
    <property type="entry name" value="IMIDAZOLE GLYCEROL PHOSPHATE SYNTHASE SUBUNIT HISF/H IGP SYNTHASE SUBUNIT HISF/H"/>
    <property type="match status" value="1"/>
</dbReference>
<dbReference type="Pfam" id="PF00977">
    <property type="entry name" value="His_biosynth"/>
    <property type="match status" value="1"/>
</dbReference>
<dbReference type="SUPFAM" id="SSF51366">
    <property type="entry name" value="Ribulose-phoshate binding barrel"/>
    <property type="match status" value="1"/>
</dbReference>